<feature type="chain" id="PRO_0000080216" description="Chromobox protein homolog 8">
    <location>
        <begin position="1"/>
        <end position="362"/>
    </location>
</feature>
<feature type="domain" description="Chromo" evidence="2">
    <location>
        <begin position="11"/>
        <end position="69"/>
    </location>
</feature>
<feature type="region of interest" description="Disordered" evidence="3">
    <location>
        <begin position="90"/>
        <end position="197"/>
    </location>
</feature>
<feature type="compositionally biased region" description="Basic and acidic residues" evidence="3">
    <location>
        <begin position="90"/>
        <end position="100"/>
    </location>
</feature>
<feature type="compositionally biased region" description="Basic and acidic residues" evidence="3">
    <location>
        <begin position="142"/>
        <end position="162"/>
    </location>
</feature>
<feature type="modified residue" description="Phosphoserine" evidence="8">
    <location>
        <position position="110"/>
    </location>
</feature>
<feature type="modified residue" description="Phosphoserine" evidence="1">
    <location>
        <position position="164"/>
    </location>
</feature>
<feature type="modified residue" description="Phosphoserine" evidence="7 8">
    <location>
        <position position="229"/>
    </location>
</feature>
<feature type="modified residue" description="Phosphotyrosine" evidence="8">
    <location>
        <position position="234"/>
    </location>
</feature>
<feature type="modified residue" description="Phosphoserine" evidence="1">
    <location>
        <position position="238"/>
    </location>
</feature>
<feature type="modified residue" description="Phosphoserine" evidence="7 8">
    <location>
        <position position="284"/>
    </location>
</feature>
<feature type="modified residue" description="Phosphoserine" evidence="1">
    <location>
        <position position="305"/>
    </location>
</feature>
<feature type="modified residue" description="Phosphoserine" evidence="1">
    <location>
        <position position="325"/>
    </location>
</feature>
<feature type="strand" evidence="9">
    <location>
        <begin position="16"/>
        <end position="30"/>
    </location>
</feature>
<feature type="strand" evidence="9">
    <location>
        <begin position="42"/>
        <end position="44"/>
    </location>
</feature>
<feature type="turn" evidence="9">
    <location>
        <begin position="45"/>
        <end position="47"/>
    </location>
</feature>
<feature type="helix" evidence="9">
    <location>
        <begin position="51"/>
        <end position="58"/>
    </location>
</feature>
<keyword id="KW-0002">3D-structure</keyword>
<keyword id="KW-0156">Chromatin regulator</keyword>
<keyword id="KW-0158">Chromosome</keyword>
<keyword id="KW-0539">Nucleus</keyword>
<keyword id="KW-0597">Phosphoprotein</keyword>
<keyword id="KW-1185">Reference proteome</keyword>
<keyword id="KW-0678">Repressor</keyword>
<keyword id="KW-0804">Transcription</keyword>
<keyword id="KW-0805">Transcription regulation</keyword>
<protein>
    <recommendedName>
        <fullName>Chromobox protein homolog 8</fullName>
    </recommendedName>
    <alternativeName>
        <fullName>Polycomb 3 homolog</fullName>
        <shortName>Pc3</shortName>
        <shortName>mPc3</shortName>
    </alternativeName>
</protein>
<dbReference type="EMBL" id="AF180370">
    <property type="protein sequence ID" value="AAF25615.1"/>
    <property type="molecule type" value="mRNA"/>
</dbReference>
<dbReference type="EMBL" id="AF202116">
    <property type="protein sequence ID" value="AAF26713.1"/>
    <property type="molecule type" value="Genomic_DNA"/>
</dbReference>
<dbReference type="EMBL" id="BC014815">
    <property type="protein sequence ID" value="AAH14815.1"/>
    <property type="molecule type" value="mRNA"/>
</dbReference>
<dbReference type="CCDS" id="CCDS25709.1"/>
<dbReference type="RefSeq" id="NP_038954.1">
    <property type="nucleotide sequence ID" value="NM_013926.1"/>
</dbReference>
<dbReference type="PDB" id="2DNV">
    <property type="method" value="NMR"/>
    <property type="chains" value="A=8-58"/>
</dbReference>
<dbReference type="PDBsum" id="2DNV"/>
<dbReference type="SMR" id="Q9QXV1"/>
<dbReference type="BioGRID" id="206027">
    <property type="interactions" value="8"/>
</dbReference>
<dbReference type="FunCoup" id="Q9QXV1">
    <property type="interactions" value="1688"/>
</dbReference>
<dbReference type="IntAct" id="Q9QXV1">
    <property type="interactions" value="5"/>
</dbReference>
<dbReference type="STRING" id="10090.ENSMUSP00000026663"/>
<dbReference type="GlyGen" id="Q9QXV1">
    <property type="glycosylation" value="2 sites"/>
</dbReference>
<dbReference type="iPTMnet" id="Q9QXV1"/>
<dbReference type="PhosphoSitePlus" id="Q9QXV1"/>
<dbReference type="jPOST" id="Q9QXV1"/>
<dbReference type="PaxDb" id="10090-ENSMUSP00000026663"/>
<dbReference type="PeptideAtlas" id="Q9QXV1"/>
<dbReference type="ProteomicsDB" id="265685"/>
<dbReference type="Pumba" id="Q9QXV1"/>
<dbReference type="Antibodypedia" id="19753">
    <property type="antibodies" value="699 antibodies from 37 providers"/>
</dbReference>
<dbReference type="DNASU" id="30951"/>
<dbReference type="Ensembl" id="ENSMUST00000026663.8">
    <property type="protein sequence ID" value="ENSMUSP00000026663.8"/>
    <property type="gene ID" value="ENSMUSG00000025578.10"/>
</dbReference>
<dbReference type="GeneID" id="30951"/>
<dbReference type="KEGG" id="mmu:30951"/>
<dbReference type="UCSC" id="uc007mpu.1">
    <property type="organism name" value="mouse"/>
</dbReference>
<dbReference type="AGR" id="MGI:1353589"/>
<dbReference type="CTD" id="57332"/>
<dbReference type="MGI" id="MGI:1353589">
    <property type="gene designation" value="Cbx8"/>
</dbReference>
<dbReference type="VEuPathDB" id="HostDB:ENSMUSG00000025578"/>
<dbReference type="eggNOG" id="KOG2748">
    <property type="taxonomic scope" value="Eukaryota"/>
</dbReference>
<dbReference type="GeneTree" id="ENSGT00940000158476"/>
<dbReference type="HOGENOM" id="CLU_042051_0_1_1"/>
<dbReference type="InParanoid" id="Q9QXV1"/>
<dbReference type="OMA" id="HPENHGH"/>
<dbReference type="OrthoDB" id="1918685at2759"/>
<dbReference type="PhylomeDB" id="Q9QXV1"/>
<dbReference type="TreeFam" id="TF106456"/>
<dbReference type="Reactome" id="R-MMU-3108214">
    <property type="pathway name" value="SUMOylation of DNA damage response and repair proteins"/>
</dbReference>
<dbReference type="Reactome" id="R-MMU-3899300">
    <property type="pathway name" value="SUMOylation of transcription cofactors"/>
</dbReference>
<dbReference type="Reactome" id="R-MMU-4551638">
    <property type="pathway name" value="SUMOylation of chromatin organization proteins"/>
</dbReference>
<dbReference type="Reactome" id="R-MMU-4570464">
    <property type="pathway name" value="SUMOylation of RNA binding proteins"/>
</dbReference>
<dbReference type="Reactome" id="R-MMU-8939243">
    <property type="pathway name" value="RUNX1 interacts with co-factors whose precise effect on RUNX1 targets is not known"/>
</dbReference>
<dbReference type="BioGRID-ORCS" id="30951">
    <property type="hits" value="0 hits in 118 CRISPR screens"/>
</dbReference>
<dbReference type="ChiTaRS" id="Cbx8">
    <property type="organism name" value="mouse"/>
</dbReference>
<dbReference type="EvolutionaryTrace" id="Q9QXV1"/>
<dbReference type="PRO" id="PR:Q9QXV1"/>
<dbReference type="Proteomes" id="UP000000589">
    <property type="component" value="Chromosome 11"/>
</dbReference>
<dbReference type="RNAct" id="Q9QXV1">
    <property type="molecule type" value="protein"/>
</dbReference>
<dbReference type="Bgee" id="ENSMUSG00000025578">
    <property type="expression patterns" value="Expressed in embryonic brain and 204 other cell types or tissues"/>
</dbReference>
<dbReference type="GO" id="GO:0000792">
    <property type="term" value="C:heterochromatin"/>
    <property type="evidence" value="ECO:0000314"/>
    <property type="project" value="UniProtKB"/>
</dbReference>
<dbReference type="GO" id="GO:0005654">
    <property type="term" value="C:nucleoplasm"/>
    <property type="evidence" value="ECO:0007669"/>
    <property type="project" value="Ensembl"/>
</dbReference>
<dbReference type="GO" id="GO:0005634">
    <property type="term" value="C:nucleus"/>
    <property type="evidence" value="ECO:0000314"/>
    <property type="project" value="UniProtKB"/>
</dbReference>
<dbReference type="GO" id="GO:0035102">
    <property type="term" value="C:PRC1 complex"/>
    <property type="evidence" value="ECO:0000314"/>
    <property type="project" value="MGI"/>
</dbReference>
<dbReference type="GO" id="GO:0061628">
    <property type="term" value="F:histone H3K27me3 reader activity"/>
    <property type="evidence" value="ECO:0007669"/>
    <property type="project" value="Ensembl"/>
</dbReference>
<dbReference type="GO" id="GO:0003727">
    <property type="term" value="F:single-stranded RNA binding"/>
    <property type="evidence" value="ECO:0000314"/>
    <property type="project" value="UniProtKB"/>
</dbReference>
<dbReference type="GO" id="GO:0097027">
    <property type="term" value="F:ubiquitin-protein transferase activator activity"/>
    <property type="evidence" value="ECO:0000314"/>
    <property type="project" value="MGI"/>
</dbReference>
<dbReference type="GO" id="GO:0070301">
    <property type="term" value="P:cellular response to hydrogen peroxide"/>
    <property type="evidence" value="ECO:0007669"/>
    <property type="project" value="Ensembl"/>
</dbReference>
<dbReference type="GO" id="GO:0031507">
    <property type="term" value="P:heterochromatin formation"/>
    <property type="evidence" value="ECO:0000250"/>
    <property type="project" value="MGI"/>
</dbReference>
<dbReference type="GO" id="GO:0000122">
    <property type="term" value="P:negative regulation of transcription by RNA polymerase II"/>
    <property type="evidence" value="ECO:0007669"/>
    <property type="project" value="Ensembl"/>
</dbReference>
<dbReference type="GO" id="GO:0008284">
    <property type="term" value="P:positive regulation of cell population proliferation"/>
    <property type="evidence" value="ECO:0007669"/>
    <property type="project" value="Ensembl"/>
</dbReference>
<dbReference type="GO" id="GO:0032967">
    <property type="term" value="P:positive regulation of collagen biosynthetic process"/>
    <property type="evidence" value="ECO:0007669"/>
    <property type="project" value="Ensembl"/>
</dbReference>
<dbReference type="GO" id="GO:0045739">
    <property type="term" value="P:positive regulation of DNA repair"/>
    <property type="evidence" value="ECO:0007669"/>
    <property type="project" value="Ensembl"/>
</dbReference>
<dbReference type="CDD" id="cd18627">
    <property type="entry name" value="CD_polycomb_like"/>
    <property type="match status" value="1"/>
</dbReference>
<dbReference type="FunFam" id="2.40.50.40:FF:000006">
    <property type="entry name" value="Chromobox protein homolog 7"/>
    <property type="match status" value="1"/>
</dbReference>
<dbReference type="Gene3D" id="2.40.50.40">
    <property type="match status" value="1"/>
</dbReference>
<dbReference type="InterPro" id="IPR033773">
    <property type="entry name" value="CBX7_C"/>
</dbReference>
<dbReference type="InterPro" id="IPR016197">
    <property type="entry name" value="Chromo-like_dom_sf"/>
</dbReference>
<dbReference type="InterPro" id="IPR000953">
    <property type="entry name" value="Chromo/chromo_shadow_dom"/>
</dbReference>
<dbReference type="InterPro" id="IPR023780">
    <property type="entry name" value="Chromo_domain"/>
</dbReference>
<dbReference type="InterPro" id="IPR023779">
    <property type="entry name" value="Chromodomain_CS"/>
</dbReference>
<dbReference type="InterPro" id="IPR052458">
    <property type="entry name" value="PcG_PRC1-like_component"/>
</dbReference>
<dbReference type="PANTHER" id="PTHR46389:SF1">
    <property type="entry name" value="CHROMOBOX PROTEIN HOMOLOG 8"/>
    <property type="match status" value="1"/>
</dbReference>
<dbReference type="PANTHER" id="PTHR46389">
    <property type="entry name" value="POLYCOMB GROUP PROTEIN PC"/>
    <property type="match status" value="1"/>
</dbReference>
<dbReference type="Pfam" id="PF17218">
    <property type="entry name" value="CBX7_C"/>
    <property type="match status" value="1"/>
</dbReference>
<dbReference type="Pfam" id="PF00385">
    <property type="entry name" value="Chromo"/>
    <property type="match status" value="1"/>
</dbReference>
<dbReference type="SMART" id="SM00298">
    <property type="entry name" value="CHROMO"/>
    <property type="match status" value="1"/>
</dbReference>
<dbReference type="SUPFAM" id="SSF54160">
    <property type="entry name" value="Chromo domain-like"/>
    <property type="match status" value="1"/>
</dbReference>
<dbReference type="PROSITE" id="PS00598">
    <property type="entry name" value="CHROMO_1"/>
    <property type="match status" value="1"/>
</dbReference>
<dbReference type="PROSITE" id="PS50013">
    <property type="entry name" value="CHROMO_2"/>
    <property type="match status" value="1"/>
</dbReference>
<comment type="function">
    <text evidence="1">Component of a Polycomb group (PcG) multiprotein PRC1-like complex, a complex class required to maintain the transcriptionally repressive state of many genes, including Hox genes, throughout development. PcG PRC1 complex acts via chromatin remodeling and modification of histones; it mediates monoubiquitination of histone H2A 'Lys-119', rendering chromatin heritably changed in its expressibility (By similarity).</text>
</comment>
<comment type="subunit">
    <text evidence="1 4 5 6">Component of a PRC1-like complex (PubMed:16359901). Interacts with RING1, RNF2, PCGF1, PCGF2, PCGF3, BMI1, PCGF5, PCGF6 and PHC2 (PubMed:16359901). Interacts with histone H3 (By similarity). Interacts with MLLT3 (Ref.8). Interacts with PHC2 (By similarity). Interacts (via chromodomain) with single-stranded RNA (PubMed:16537902).</text>
</comment>
<comment type="interaction">
    <interactant intactId="EBI-1216641">
        <id>Q9QXV1</id>
    </interactant>
    <interactant intactId="EBI-927401">
        <id>P25916</id>
        <label>Bmi1</label>
    </interactant>
    <organismsDiffer>false</organismsDiffer>
    <experiments>3</experiments>
</comment>
<comment type="interaction">
    <interactant intactId="EBI-1216641">
        <id>Q9QXV1</id>
    </interactant>
    <interactant intactId="EBI-929310">
        <id>O35730</id>
        <label>Ring1</label>
    </interactant>
    <organismsDiffer>false</organismsDiffer>
    <experiments>2</experiments>
</comment>
<comment type="interaction">
    <interactant intactId="EBI-1216641">
        <id>Q9QXV1</id>
    </interactant>
    <interactant intactId="EBI-927321">
        <id>Q9CQJ4</id>
        <label>Rnf2</label>
    </interactant>
    <organismsDiffer>false</organismsDiffer>
    <experiments>5</experiments>
</comment>
<comment type="subcellular location">
    <subcellularLocation>
        <location evidence="6">Nucleus</location>
    </subcellularLocation>
    <subcellularLocation>
        <location evidence="6">Chromosome</location>
    </subcellularLocation>
    <text evidence="6">Localizes to the inactivated X chromosome in females.</text>
</comment>
<name>CBX8_MOUSE</name>
<reference key="1">
    <citation type="journal article" date="2000" name="Gene">
        <title>Identification and analysis of a third mouse Polycomb gene, MPc3.</title>
        <authorList>
            <person name="Hemenway C.S."/>
            <person name="Halligan B.W."/>
            <person name="Gould G.C.D."/>
            <person name="Levy L.S."/>
        </authorList>
    </citation>
    <scope>NUCLEOTIDE SEQUENCE [GENOMIC DNA / MRNA]</scope>
    <source>
        <strain>129/SvJ</strain>
    </source>
</reference>
<reference key="2">
    <citation type="journal article" date="2004" name="Genome Res.">
        <title>The status, quality, and expansion of the NIH full-length cDNA project: the Mammalian Gene Collection (MGC).</title>
        <authorList>
            <consortium name="The MGC Project Team"/>
        </authorList>
    </citation>
    <scope>NUCLEOTIDE SEQUENCE [LARGE SCALE MRNA]</scope>
    <source>
        <strain>FVB/N</strain>
        <tissue>Mammary gland</tissue>
    </source>
</reference>
<reference key="3">
    <citation type="journal article" date="2005" name="Mol. Cell">
        <title>Role of Bmi-1 and Ring1A in H2A ubiquitylation and Hox gene silencing.</title>
        <authorList>
            <person name="Cao R."/>
            <person name="Tsukada Y."/>
            <person name="Zhang Y."/>
        </authorList>
    </citation>
    <scope>RECONSTITUTION OF A PRC1-LIKE COMPLEX</scope>
    <scope>INTERACTION WITH RING1; RNF2; BMI1 AND PHC2</scope>
</reference>
<reference key="4">
    <citation type="journal article" date="2001" name="Oncogene">
        <title>The polycomb protein MPc3 interacts with AF9, an MLL fusion partner in t(9;11)(p22;q23) acute leukemias.</title>
        <authorList>
            <person name="Hemenway C.S."/>
            <person name="de Erkenez A.C."/>
            <person name="Gould G.C.D."/>
        </authorList>
    </citation>
    <scope>INTERACTION WITH MLLT3</scope>
</reference>
<reference key="5">
    <citation type="journal article" date="2006" name="Mol. Cell. Biol.">
        <title>Mouse polycomb proteins bind differentially to methylated histone H3 and RNA and are enriched in facultative heterochromatin.</title>
        <authorList>
            <person name="Bernstein E."/>
            <person name="Duncan E.M."/>
            <person name="Masui O."/>
            <person name="Gil J."/>
            <person name="Heard E."/>
            <person name="Allis C.D."/>
        </authorList>
    </citation>
    <scope>INTERACTION WITH RNA</scope>
    <scope>SUBCELLULAR LOCATION</scope>
</reference>
<reference key="6">
    <citation type="journal article" date="2007" name="Proc. Natl. Acad. Sci. U.S.A.">
        <title>Large-scale phosphorylation analysis of mouse liver.</title>
        <authorList>
            <person name="Villen J."/>
            <person name="Beausoleil S.A."/>
            <person name="Gerber S.A."/>
            <person name="Gygi S.P."/>
        </authorList>
    </citation>
    <scope>PHOSPHORYLATION [LARGE SCALE ANALYSIS] AT SER-229 AND SER-284</scope>
    <scope>IDENTIFICATION BY MASS SPECTROMETRY [LARGE SCALE ANALYSIS]</scope>
    <source>
        <tissue>Liver</tissue>
    </source>
</reference>
<reference key="7">
    <citation type="journal article" date="2010" name="Cell">
        <title>A tissue-specific atlas of mouse protein phosphorylation and expression.</title>
        <authorList>
            <person name="Huttlin E.L."/>
            <person name="Jedrychowski M.P."/>
            <person name="Elias J.E."/>
            <person name="Goswami T."/>
            <person name="Rad R."/>
            <person name="Beausoleil S.A."/>
            <person name="Villen J."/>
            <person name="Haas W."/>
            <person name="Sowa M.E."/>
            <person name="Gygi S.P."/>
        </authorList>
    </citation>
    <scope>PHOSPHORYLATION [LARGE SCALE ANALYSIS] AT SER-110; SER-229; TYR-234 AND SER-284</scope>
    <scope>IDENTIFICATION BY MASS SPECTROMETRY [LARGE SCALE ANALYSIS]</scope>
    <source>
        <tissue>Brain</tissue>
        <tissue>Brown adipose tissue</tissue>
        <tissue>Heart</tissue>
        <tissue>Kidney</tissue>
        <tissue>Lung</tissue>
        <tissue>Pancreas</tissue>
        <tissue>Spleen</tissue>
    </source>
</reference>
<reference key="8">
    <citation type="submission" date="2006-10" db="PDB data bank">
        <title>Solution structure of RSGI RUH-055, a chromo domain from Mus musculus cDNA.</title>
        <authorList>
            <consortium name="RIKEN structural genomics initiative (RSGI)"/>
        </authorList>
    </citation>
    <scope>STRUCTURE BY NMR OF 7-58</scope>
</reference>
<sequence length="362" mass="39860">MELSAVGERVFAAEALLKRRIRKGRMEYLVKWKGWSQKYSTWEPEENILDARLLAAFEEREREMELYGPKKRGPKPKTFLLKAQAKAKAKTYEFRSDSTRGIRIPYPGRSPQDLASTSRAREGLRNTGLPPPGSSTSTCRADPPRDRDRERDRGTSRVDDKPSSPGDSSKKRGPKPRKEPLDPSQRPLGEPSAGLGEYLKGRKLDETSSGTGKFPAGHSVIQLARRQDSDLVQYGVTSPSSAEASSKLAVDTFPARVIKHRAAFLEAKGQGALDPGGARVRHSSGTPASVGSLYRDMGAQGGRPSLIARIPVARILGDPEEESWSPSLTNLEKVVVTDVTSNFLTVTIKESNTDQGFFKEKR</sequence>
<gene>
    <name type="primary">Cbx8</name>
    <name type="synonym">Pc3</name>
</gene>
<organism>
    <name type="scientific">Mus musculus</name>
    <name type="common">Mouse</name>
    <dbReference type="NCBI Taxonomy" id="10090"/>
    <lineage>
        <taxon>Eukaryota</taxon>
        <taxon>Metazoa</taxon>
        <taxon>Chordata</taxon>
        <taxon>Craniata</taxon>
        <taxon>Vertebrata</taxon>
        <taxon>Euteleostomi</taxon>
        <taxon>Mammalia</taxon>
        <taxon>Eutheria</taxon>
        <taxon>Euarchontoglires</taxon>
        <taxon>Glires</taxon>
        <taxon>Rodentia</taxon>
        <taxon>Myomorpha</taxon>
        <taxon>Muroidea</taxon>
        <taxon>Muridae</taxon>
        <taxon>Murinae</taxon>
        <taxon>Mus</taxon>
        <taxon>Mus</taxon>
    </lineage>
</organism>
<proteinExistence type="evidence at protein level"/>
<evidence type="ECO:0000250" key="1">
    <source>
        <dbReference type="UniProtKB" id="Q9HC52"/>
    </source>
</evidence>
<evidence type="ECO:0000255" key="2">
    <source>
        <dbReference type="PROSITE-ProRule" id="PRU00053"/>
    </source>
</evidence>
<evidence type="ECO:0000256" key="3">
    <source>
        <dbReference type="SAM" id="MobiDB-lite"/>
    </source>
</evidence>
<evidence type="ECO:0000269" key="4">
    <source>
    </source>
</evidence>
<evidence type="ECO:0000269" key="5">
    <source>
    </source>
</evidence>
<evidence type="ECO:0000269" key="6">
    <source>
    </source>
</evidence>
<evidence type="ECO:0007744" key="7">
    <source>
    </source>
</evidence>
<evidence type="ECO:0007744" key="8">
    <source>
    </source>
</evidence>
<evidence type="ECO:0007829" key="9">
    <source>
        <dbReference type="PDB" id="2DNV"/>
    </source>
</evidence>
<accession>Q9QXV1</accession>